<reference key="1">
    <citation type="journal article" date="2009" name="PLoS Biol.">
        <title>Lineage-specific biology revealed by a finished genome assembly of the mouse.</title>
        <authorList>
            <person name="Church D.M."/>
            <person name="Goodstadt L."/>
            <person name="Hillier L.W."/>
            <person name="Zody M.C."/>
            <person name="Goldstein S."/>
            <person name="She X."/>
            <person name="Bult C.J."/>
            <person name="Agarwala R."/>
            <person name="Cherry J.L."/>
            <person name="DiCuccio M."/>
            <person name="Hlavina W."/>
            <person name="Kapustin Y."/>
            <person name="Meric P."/>
            <person name="Maglott D."/>
            <person name="Birtle Z."/>
            <person name="Marques A.C."/>
            <person name="Graves T."/>
            <person name="Zhou S."/>
            <person name="Teague B."/>
            <person name="Potamousis K."/>
            <person name="Churas C."/>
            <person name="Place M."/>
            <person name="Herschleb J."/>
            <person name="Runnheim R."/>
            <person name="Forrest D."/>
            <person name="Amos-Landgraf J."/>
            <person name="Schwartz D.C."/>
            <person name="Cheng Z."/>
            <person name="Lindblad-Toh K."/>
            <person name="Eichler E.E."/>
            <person name="Ponting C.P."/>
        </authorList>
    </citation>
    <scope>NUCLEOTIDE SEQUENCE [LARGE SCALE GENOMIC DNA]</scope>
    <source>
        <strain>C57BL/6J</strain>
    </source>
</reference>
<keyword id="KW-0175">Coiled coil</keyword>
<keyword id="KW-1185">Reference proteome</keyword>
<gene>
    <name evidence="4" type="primary">Crocc2</name>
</gene>
<sequence>MSSTSSNPDDGDTTEQSQLGLDTVIKKLEDTILSPMARREDRALTVRGEGQRASPTPVPARIREIVSSSLGEEPLSGLREPPATTSHAREESELLQEELTRLEDLLAQADAEREELASRCHMVSQRLQARLDTTEARLRKSELEHSMDLEEALSRLEASQQRSMGLSQVNTLLRQQLEHMQKANDTLARELTRATHSLVHLQRKLELQESQRLSLRQPRDILPLWRQAKALQTHLAELRASTERGLTDVQADMTRTAQRLHMACLNLDSHLRLTASSMTSDLEQRLREQAREMLQLQGQWAAEKVALQARLSEQTLLVEKLSVQKEQGERAILTLKSDIQRLKSRRSGGQLAVDELRDEVESLHHVLASIKEVAQSDAMCPELAWSSSIEVREAQARLRSPPRSVSPHQRMSPARTSSPTSLHPALQAVQAAIERRQQREQELRLRLESSQEEAAGLREQLSGYRQELRTSQRLLQDRAQEHEDLLGQLEAQRQEAQLSQASVHLLEREKEALETTMEELRAKADIREAETQKLEVTNAELRRSLLLRAEQKAELAQQSERSLRELEASQGRVEQLEEKVSGLRKELATSREALSSMQLQRDILETEKESLHGALAQAESGNADLELLVTRLKAEGMEQQDSLAKMAALLEGLSQDKGTLNHLALQLEQERDQLREQQKMLQQEQAGMREQLTQTGQQLGLIRAERRSLKETCGHLEQKQDHLEKQVVLLGQENAQLREQVGQVTNKKQALEKQLAQSLQDQEAQMDILQEALHEKNTLSEERAQLLAKQEALERHSELVTKEAADLRAERNSLENSLFEAQRLTTQLQTQQEQLEGKAEAAQLARRALQVEIERLKSDWEVRETKLQLHLGQLQQQAAQQEQEAQLALERQELAHTEDLARLHREKDTLSLSLAEEKEAAARWMEQQKELLTRSAADREALQGEIQNLKQERDESLLQLEHEMQQALSLKDAEKSLLSKELSGAHRELERARQEAQNQQVQAEATVTTMTKELRTLQVQFEEAISTHQREADTLREKLREIAAERSSVRREAEELQAQLNVAHERLAELRQELQASEESREGLQREALGARRALEDEVQEKDVLQHSNTELRASIHRAEQEKASLKRSKEEQEQKLLLLQEAQVAAQKEAYELRTRLQELERAQRDTRRKLQERHRQVRTLEAENQRKRQEVSDLQAQVSRDAQHRQKNLQESLELQRQVAEAQAAHDGVQKEVLGLRQKLAEVEASGETRAKQLEGHLCESQRAEQTLQAELCRITRKLQEASNQADSLQRSLDNACSRVHVLEQELAKAEGARCNAEAQLGRLWSTLCSGLGQSRNLLASPKRPHSPTTGSSQTRPGRQRTSPPTRSYSPARWPSPVPVDPKSEVIDVAFVRDALRDLVQGLLEAQQERDNSGIQVANLSSQLSEAERERLRLQSRVEQLQRDLADAEEGQRRAESALQSAQAARALQKEALQRLETEHLASARAAGQERRRLQEQVDTLRQALEESSRPSQSLADKGRLLEQPLQQVLPHSRRDRAERRALREQTTSLRTERARLQGELAALRTRLIQTEQETLKKEEDRAMLGAKKELLLQSLSHLHQEVDGALRQSQQLQVASLKKRLDKEVWQRQQQAHSD</sequence>
<evidence type="ECO:0000255" key="1"/>
<evidence type="ECO:0000256" key="2">
    <source>
        <dbReference type="SAM" id="MobiDB-lite"/>
    </source>
</evidence>
<evidence type="ECO:0000305" key="3"/>
<evidence type="ECO:0000312" key="4">
    <source>
        <dbReference type="MGI" id="MGI:3045962"/>
    </source>
</evidence>
<dbReference type="EMBL" id="AC103673">
    <property type="status" value="NOT_ANNOTATED_CDS"/>
    <property type="molecule type" value="Genomic_DNA"/>
</dbReference>
<dbReference type="EMBL" id="AC124669">
    <property type="status" value="NOT_ANNOTATED_CDS"/>
    <property type="molecule type" value="Genomic_DNA"/>
</dbReference>
<dbReference type="CCDS" id="CCDS78654.1"/>
<dbReference type="RefSeq" id="NP_001297357.1">
    <property type="nucleotide sequence ID" value="NM_001310428.1"/>
</dbReference>
<dbReference type="SMR" id="F6XLV1"/>
<dbReference type="FunCoup" id="F6XLV1">
    <property type="interactions" value="2"/>
</dbReference>
<dbReference type="STRING" id="10090.ENSMUSP00000120588"/>
<dbReference type="GlyGen" id="F6XLV1">
    <property type="glycosylation" value="2 sites, 1 O-linked glycan (1 site)"/>
</dbReference>
<dbReference type="iPTMnet" id="F6XLV1"/>
<dbReference type="PhosphoSitePlus" id="F6XLV1"/>
<dbReference type="PaxDb" id="10090-ENSMUSP00000120588"/>
<dbReference type="ProteomicsDB" id="373562"/>
<dbReference type="Antibodypedia" id="62332">
    <property type="antibodies" value="3 antibodies from 3 providers"/>
</dbReference>
<dbReference type="Ensembl" id="ENSMUST00000138595.3">
    <property type="protein sequence ID" value="ENSMUSP00000120588.3"/>
    <property type="gene ID" value="ENSMUSG00000084989.4"/>
</dbReference>
<dbReference type="GeneID" id="381284"/>
<dbReference type="KEGG" id="mmu:381284"/>
<dbReference type="AGR" id="MGI:3045962"/>
<dbReference type="CTD" id="728763"/>
<dbReference type="MGI" id="MGI:3045962">
    <property type="gene designation" value="Crocc2"/>
</dbReference>
<dbReference type="VEuPathDB" id="HostDB:ENSMUSG00000084989"/>
<dbReference type="eggNOG" id="ENOG502QQV3">
    <property type="taxonomic scope" value="Eukaryota"/>
</dbReference>
<dbReference type="GeneTree" id="ENSGT00940000162689"/>
<dbReference type="HOGENOM" id="CLU_000920_1_0_1"/>
<dbReference type="InParanoid" id="F6XLV1"/>
<dbReference type="OMA" id="TCQKQAL"/>
<dbReference type="OrthoDB" id="3549872at2759"/>
<dbReference type="BioGRID-ORCS" id="381284">
    <property type="hits" value="0 hits in 37 CRISPR screens"/>
</dbReference>
<dbReference type="ChiTaRS" id="Crocc2">
    <property type="organism name" value="mouse"/>
</dbReference>
<dbReference type="PRO" id="PR:F6XLV1"/>
<dbReference type="Proteomes" id="UP000000589">
    <property type="component" value="Chromosome 1"/>
</dbReference>
<dbReference type="RNAct" id="F6XLV1">
    <property type="molecule type" value="protein"/>
</dbReference>
<dbReference type="Bgee" id="ENSMUSG00000084989">
    <property type="expression patterns" value="Expressed in mesenchyme and 24 other cell types or tissues"/>
</dbReference>
<dbReference type="InterPro" id="IPR055167">
    <property type="entry name" value="Rootletin-like_CC"/>
</dbReference>
<dbReference type="PANTHER" id="PTHR23159">
    <property type="entry name" value="CENTROSOMAL PROTEIN 2"/>
    <property type="match status" value="1"/>
</dbReference>
<dbReference type="PANTHER" id="PTHR23159:SF31">
    <property type="entry name" value="CENTROSOME-ASSOCIATED PROTEIN CEP250 ISOFORM X1"/>
    <property type="match status" value="1"/>
</dbReference>
<dbReference type="Pfam" id="PF15035">
    <property type="entry name" value="Rootletin"/>
    <property type="match status" value="1"/>
</dbReference>
<feature type="chain" id="PRO_0000452751" description="Ciliary rootlet coiled-coil protein 2">
    <location>
        <begin position="1"/>
        <end position="1638"/>
    </location>
</feature>
<feature type="region of interest" description="Disordered" evidence="2">
    <location>
        <begin position="1"/>
        <end position="21"/>
    </location>
</feature>
<feature type="region of interest" description="Disordered" evidence="2">
    <location>
        <begin position="39"/>
        <end position="92"/>
    </location>
</feature>
<feature type="region of interest" description="Disordered" evidence="2">
    <location>
        <begin position="396"/>
        <end position="423"/>
    </location>
</feature>
<feature type="region of interest" description="Disordered" evidence="2">
    <location>
        <begin position="1168"/>
        <end position="1213"/>
    </location>
</feature>
<feature type="region of interest" description="Disordered" evidence="2">
    <location>
        <begin position="1338"/>
        <end position="1383"/>
    </location>
</feature>
<feature type="region of interest" description="Disordered" evidence="2">
    <location>
        <begin position="1506"/>
        <end position="1551"/>
    </location>
</feature>
<feature type="coiled-coil region" evidence="1">
    <location>
        <begin position="85"/>
        <end position="144"/>
    </location>
</feature>
<feature type="coiled-coil region" evidence="1">
    <location>
        <begin position="426"/>
        <end position="1234"/>
    </location>
</feature>
<feature type="coiled-coil region" evidence="1">
    <location>
        <begin position="1281"/>
        <end position="1315"/>
    </location>
</feature>
<feature type="coiled-coil region" evidence="1">
    <location>
        <begin position="1412"/>
        <end position="1506"/>
    </location>
</feature>
<feature type="coiled-coil region" evidence="1">
    <location>
        <begin position="1542"/>
        <end position="1576"/>
    </location>
</feature>
<feature type="compositionally biased region" description="Polar residues" evidence="2">
    <location>
        <begin position="1"/>
        <end position="20"/>
    </location>
</feature>
<feature type="compositionally biased region" description="Low complexity" evidence="2">
    <location>
        <begin position="67"/>
        <end position="82"/>
    </location>
</feature>
<feature type="compositionally biased region" description="Polar residues" evidence="2">
    <location>
        <begin position="406"/>
        <end position="421"/>
    </location>
</feature>
<feature type="compositionally biased region" description="Basic and acidic residues" evidence="2">
    <location>
        <begin position="1180"/>
        <end position="1193"/>
    </location>
</feature>
<feature type="compositionally biased region" description="Polar residues" evidence="2">
    <location>
        <begin position="1349"/>
        <end position="1371"/>
    </location>
</feature>
<organism>
    <name type="scientific">Mus musculus</name>
    <name type="common">Mouse</name>
    <dbReference type="NCBI Taxonomy" id="10090"/>
    <lineage>
        <taxon>Eukaryota</taxon>
        <taxon>Metazoa</taxon>
        <taxon>Chordata</taxon>
        <taxon>Craniata</taxon>
        <taxon>Vertebrata</taxon>
        <taxon>Euteleostomi</taxon>
        <taxon>Mammalia</taxon>
        <taxon>Eutheria</taxon>
        <taxon>Euarchontoglires</taxon>
        <taxon>Glires</taxon>
        <taxon>Rodentia</taxon>
        <taxon>Myomorpha</taxon>
        <taxon>Muroidea</taxon>
        <taxon>Muridae</taxon>
        <taxon>Murinae</taxon>
        <taxon>Mus</taxon>
        <taxon>Mus</taxon>
    </lineage>
</organism>
<comment type="similarity">
    <text evidence="3">Belongs to the rootletin family.</text>
</comment>
<proteinExistence type="inferred from homology"/>
<accession>F6XLV1</accession>
<name>CRCC2_MOUSE</name>
<protein>
    <recommendedName>
        <fullName evidence="3">Ciliary rootlet coiled-coil protein 2</fullName>
    </recommendedName>
</protein>